<gene>
    <name evidence="1" type="primary">dxr</name>
    <name type="ordered locus">Nwi_1853</name>
</gene>
<evidence type="ECO:0000255" key="1">
    <source>
        <dbReference type="HAMAP-Rule" id="MF_00183"/>
    </source>
</evidence>
<comment type="function">
    <text evidence="1">Catalyzes the NADPH-dependent rearrangement and reduction of 1-deoxy-D-xylulose-5-phosphate (DXP) to 2-C-methyl-D-erythritol 4-phosphate (MEP).</text>
</comment>
<comment type="catalytic activity">
    <reaction evidence="1">
        <text>2-C-methyl-D-erythritol 4-phosphate + NADP(+) = 1-deoxy-D-xylulose 5-phosphate + NADPH + H(+)</text>
        <dbReference type="Rhea" id="RHEA:13717"/>
        <dbReference type="ChEBI" id="CHEBI:15378"/>
        <dbReference type="ChEBI" id="CHEBI:57783"/>
        <dbReference type="ChEBI" id="CHEBI:57792"/>
        <dbReference type="ChEBI" id="CHEBI:58262"/>
        <dbReference type="ChEBI" id="CHEBI:58349"/>
        <dbReference type="EC" id="1.1.1.267"/>
    </reaction>
    <physiologicalReaction direction="right-to-left" evidence="1">
        <dbReference type="Rhea" id="RHEA:13719"/>
    </physiologicalReaction>
</comment>
<comment type="cofactor">
    <cofactor evidence="1">
        <name>Mg(2+)</name>
        <dbReference type="ChEBI" id="CHEBI:18420"/>
    </cofactor>
    <cofactor evidence="1">
        <name>Mn(2+)</name>
        <dbReference type="ChEBI" id="CHEBI:29035"/>
    </cofactor>
</comment>
<comment type="pathway">
    <text evidence="1">Isoprenoid biosynthesis; isopentenyl diphosphate biosynthesis via DXP pathway; isopentenyl diphosphate from 1-deoxy-D-xylulose 5-phosphate: step 1/6.</text>
</comment>
<comment type="similarity">
    <text evidence="1">Belongs to the DXR family.</text>
</comment>
<keyword id="KW-0414">Isoprene biosynthesis</keyword>
<keyword id="KW-0464">Manganese</keyword>
<keyword id="KW-0479">Metal-binding</keyword>
<keyword id="KW-0521">NADP</keyword>
<keyword id="KW-0560">Oxidoreductase</keyword>
<keyword id="KW-1185">Reference proteome</keyword>
<organism>
    <name type="scientific">Nitrobacter winogradskyi (strain ATCC 25391 / DSM 10237 / CIP 104748 / NCIMB 11846 / Nb-255)</name>
    <dbReference type="NCBI Taxonomy" id="323098"/>
    <lineage>
        <taxon>Bacteria</taxon>
        <taxon>Pseudomonadati</taxon>
        <taxon>Pseudomonadota</taxon>
        <taxon>Alphaproteobacteria</taxon>
        <taxon>Hyphomicrobiales</taxon>
        <taxon>Nitrobacteraceae</taxon>
        <taxon>Nitrobacter</taxon>
    </lineage>
</organism>
<proteinExistence type="inferred from homology"/>
<protein>
    <recommendedName>
        <fullName evidence="1">1-deoxy-D-xylulose 5-phosphate reductoisomerase</fullName>
        <shortName evidence="1">DXP reductoisomerase</shortName>
        <ecNumber evidence="1">1.1.1.267</ecNumber>
    </recommendedName>
    <alternativeName>
        <fullName evidence="1">1-deoxyxylulose-5-phosphate reductoisomerase</fullName>
    </alternativeName>
    <alternativeName>
        <fullName evidence="1">2-C-methyl-D-erythritol 4-phosphate synthase</fullName>
    </alternativeName>
</protein>
<name>DXR_NITWN</name>
<dbReference type="EC" id="1.1.1.267" evidence="1"/>
<dbReference type="EMBL" id="CP000115">
    <property type="protein sequence ID" value="ABA05113.1"/>
    <property type="molecule type" value="Genomic_DNA"/>
</dbReference>
<dbReference type="RefSeq" id="WP_011315109.1">
    <property type="nucleotide sequence ID" value="NC_007406.1"/>
</dbReference>
<dbReference type="SMR" id="Q3SRH8"/>
<dbReference type="STRING" id="323098.Nwi_1853"/>
<dbReference type="KEGG" id="nwi:Nwi_1853"/>
<dbReference type="eggNOG" id="COG0743">
    <property type="taxonomic scope" value="Bacteria"/>
</dbReference>
<dbReference type="HOGENOM" id="CLU_035714_4_0_5"/>
<dbReference type="OrthoDB" id="9806546at2"/>
<dbReference type="UniPathway" id="UPA00056">
    <property type="reaction ID" value="UER00092"/>
</dbReference>
<dbReference type="Proteomes" id="UP000002531">
    <property type="component" value="Chromosome"/>
</dbReference>
<dbReference type="GO" id="GO:0030604">
    <property type="term" value="F:1-deoxy-D-xylulose-5-phosphate reductoisomerase activity"/>
    <property type="evidence" value="ECO:0007669"/>
    <property type="project" value="UniProtKB-UniRule"/>
</dbReference>
<dbReference type="GO" id="GO:0030145">
    <property type="term" value="F:manganese ion binding"/>
    <property type="evidence" value="ECO:0007669"/>
    <property type="project" value="TreeGrafter"/>
</dbReference>
<dbReference type="GO" id="GO:0070402">
    <property type="term" value="F:NADPH binding"/>
    <property type="evidence" value="ECO:0007669"/>
    <property type="project" value="InterPro"/>
</dbReference>
<dbReference type="GO" id="GO:0051484">
    <property type="term" value="P:isopentenyl diphosphate biosynthetic process, methylerythritol 4-phosphate pathway involved in terpenoid biosynthetic process"/>
    <property type="evidence" value="ECO:0007669"/>
    <property type="project" value="TreeGrafter"/>
</dbReference>
<dbReference type="FunFam" id="3.40.50.720:FF:000045">
    <property type="entry name" value="1-deoxy-D-xylulose 5-phosphate reductoisomerase"/>
    <property type="match status" value="1"/>
</dbReference>
<dbReference type="Gene3D" id="1.10.1740.10">
    <property type="match status" value="1"/>
</dbReference>
<dbReference type="Gene3D" id="3.40.50.720">
    <property type="entry name" value="NAD(P)-binding Rossmann-like Domain"/>
    <property type="match status" value="1"/>
</dbReference>
<dbReference type="HAMAP" id="MF_00183">
    <property type="entry name" value="DXP_reductoisom"/>
    <property type="match status" value="1"/>
</dbReference>
<dbReference type="InterPro" id="IPR003821">
    <property type="entry name" value="DXP_reductoisomerase"/>
</dbReference>
<dbReference type="InterPro" id="IPR013644">
    <property type="entry name" value="DXP_reductoisomerase_C"/>
</dbReference>
<dbReference type="InterPro" id="IPR013512">
    <property type="entry name" value="DXP_reductoisomerase_N"/>
</dbReference>
<dbReference type="InterPro" id="IPR026877">
    <property type="entry name" value="DXPR_C"/>
</dbReference>
<dbReference type="InterPro" id="IPR036169">
    <property type="entry name" value="DXPR_C_sf"/>
</dbReference>
<dbReference type="InterPro" id="IPR036291">
    <property type="entry name" value="NAD(P)-bd_dom_sf"/>
</dbReference>
<dbReference type="NCBIfam" id="TIGR00243">
    <property type="entry name" value="Dxr"/>
    <property type="match status" value="1"/>
</dbReference>
<dbReference type="PANTHER" id="PTHR30525">
    <property type="entry name" value="1-DEOXY-D-XYLULOSE 5-PHOSPHATE REDUCTOISOMERASE"/>
    <property type="match status" value="1"/>
</dbReference>
<dbReference type="PANTHER" id="PTHR30525:SF0">
    <property type="entry name" value="1-DEOXY-D-XYLULOSE 5-PHOSPHATE REDUCTOISOMERASE, CHLOROPLASTIC"/>
    <property type="match status" value="1"/>
</dbReference>
<dbReference type="Pfam" id="PF08436">
    <property type="entry name" value="DXP_redisom_C"/>
    <property type="match status" value="1"/>
</dbReference>
<dbReference type="Pfam" id="PF02670">
    <property type="entry name" value="DXP_reductoisom"/>
    <property type="match status" value="1"/>
</dbReference>
<dbReference type="Pfam" id="PF13288">
    <property type="entry name" value="DXPR_C"/>
    <property type="match status" value="1"/>
</dbReference>
<dbReference type="PIRSF" id="PIRSF006205">
    <property type="entry name" value="Dxp_reductismrs"/>
    <property type="match status" value="1"/>
</dbReference>
<dbReference type="SUPFAM" id="SSF69055">
    <property type="entry name" value="1-deoxy-D-xylulose-5-phosphate reductoisomerase, C-terminal domain"/>
    <property type="match status" value="1"/>
</dbReference>
<dbReference type="SUPFAM" id="SSF55347">
    <property type="entry name" value="Glyceraldehyde-3-phosphate dehydrogenase-like, C-terminal domain"/>
    <property type="match status" value="1"/>
</dbReference>
<dbReference type="SUPFAM" id="SSF51735">
    <property type="entry name" value="NAD(P)-binding Rossmann-fold domains"/>
    <property type="match status" value="1"/>
</dbReference>
<accession>Q3SRH8</accession>
<sequence>MSAVPLKNDKPVEAGVRTVTVLGATGSIGDSTMDLLRGARGRYRVEALTANSNVEGLVKLAREFDARFVALADTSYFDELKNALAGTGIEYGVGESAIIEAASRPADWLMAAVSGAAGLKPALAAVDRGATIALANKECLVCAGDFFMQRAARAGACVLPADSEHNALFQALSSGNRDELTRVIITASGGPFRTWAAADIENATLAQALKHPNWSMGRKITIDSASMMNKGLEVIEAACLFALEPEEIDVLVHPQSIVHGMVEFSDRSVVAQLGAPDMRTPIAHCLGWPERIAGPAAKLDLVSIGQLTFEAPDFARFPALRLAYDALRTGQGATTVYNAANEIAVAAFIAEKIRFGAIARLVEATLNGWVRAGNLAPLASADDAIAVDHNARNMAASLLPQIAAKAS</sequence>
<reference key="1">
    <citation type="journal article" date="2006" name="Appl. Environ. Microbiol.">
        <title>Genome sequence of the chemolithoautotrophic nitrite-oxidizing bacterium Nitrobacter winogradskyi Nb-255.</title>
        <authorList>
            <person name="Starkenburg S.R."/>
            <person name="Chain P.S.G."/>
            <person name="Sayavedra-Soto L.A."/>
            <person name="Hauser L."/>
            <person name="Land M.L."/>
            <person name="Larimer F.W."/>
            <person name="Malfatti S.A."/>
            <person name="Klotz M.G."/>
            <person name="Bottomley P.J."/>
            <person name="Arp D.J."/>
            <person name="Hickey W.J."/>
        </authorList>
    </citation>
    <scope>NUCLEOTIDE SEQUENCE [LARGE SCALE GENOMIC DNA]</scope>
    <source>
        <strain>ATCC 25391 / DSM 10237 / CIP 104748 / NCIMB 11846 / Nb-255</strain>
    </source>
</reference>
<feature type="chain" id="PRO_1000020284" description="1-deoxy-D-xylulose 5-phosphate reductoisomerase">
    <location>
        <begin position="1"/>
        <end position="407"/>
    </location>
</feature>
<feature type="binding site" evidence="1">
    <location>
        <position position="25"/>
    </location>
    <ligand>
        <name>NADPH</name>
        <dbReference type="ChEBI" id="CHEBI:57783"/>
    </ligand>
</feature>
<feature type="binding site" evidence="1">
    <location>
        <position position="26"/>
    </location>
    <ligand>
        <name>NADPH</name>
        <dbReference type="ChEBI" id="CHEBI:57783"/>
    </ligand>
</feature>
<feature type="binding site" evidence="1">
    <location>
        <position position="27"/>
    </location>
    <ligand>
        <name>NADPH</name>
        <dbReference type="ChEBI" id="CHEBI:57783"/>
    </ligand>
</feature>
<feature type="binding site" evidence="1">
    <location>
        <position position="28"/>
    </location>
    <ligand>
        <name>NADPH</name>
        <dbReference type="ChEBI" id="CHEBI:57783"/>
    </ligand>
</feature>
<feature type="binding site" evidence="1">
    <location>
        <position position="53"/>
    </location>
    <ligand>
        <name>NADPH</name>
        <dbReference type="ChEBI" id="CHEBI:57783"/>
    </ligand>
</feature>
<feature type="binding site" evidence="1">
    <location>
        <position position="136"/>
    </location>
    <ligand>
        <name>NADPH</name>
        <dbReference type="ChEBI" id="CHEBI:57783"/>
    </ligand>
</feature>
<feature type="binding site" evidence="1">
    <location>
        <position position="137"/>
    </location>
    <ligand>
        <name>1-deoxy-D-xylulose 5-phosphate</name>
        <dbReference type="ChEBI" id="CHEBI:57792"/>
    </ligand>
</feature>
<feature type="binding site" evidence="1">
    <location>
        <position position="138"/>
    </location>
    <ligand>
        <name>NADPH</name>
        <dbReference type="ChEBI" id="CHEBI:57783"/>
    </ligand>
</feature>
<feature type="binding site" evidence="1">
    <location>
        <position position="162"/>
    </location>
    <ligand>
        <name>Mn(2+)</name>
        <dbReference type="ChEBI" id="CHEBI:29035"/>
    </ligand>
</feature>
<feature type="binding site" evidence="1">
    <location>
        <position position="163"/>
    </location>
    <ligand>
        <name>1-deoxy-D-xylulose 5-phosphate</name>
        <dbReference type="ChEBI" id="CHEBI:57792"/>
    </ligand>
</feature>
<feature type="binding site" evidence="1">
    <location>
        <position position="164"/>
    </location>
    <ligand>
        <name>1-deoxy-D-xylulose 5-phosphate</name>
        <dbReference type="ChEBI" id="CHEBI:57792"/>
    </ligand>
</feature>
<feature type="binding site" evidence="1">
    <location>
        <position position="164"/>
    </location>
    <ligand>
        <name>Mn(2+)</name>
        <dbReference type="ChEBI" id="CHEBI:29035"/>
    </ligand>
</feature>
<feature type="binding site" evidence="1">
    <location>
        <position position="188"/>
    </location>
    <ligand>
        <name>1-deoxy-D-xylulose 5-phosphate</name>
        <dbReference type="ChEBI" id="CHEBI:57792"/>
    </ligand>
</feature>
<feature type="binding site" evidence="1">
    <location>
        <position position="211"/>
    </location>
    <ligand>
        <name>1-deoxy-D-xylulose 5-phosphate</name>
        <dbReference type="ChEBI" id="CHEBI:57792"/>
    </ligand>
</feature>
<feature type="binding site" evidence="1">
    <location>
        <position position="217"/>
    </location>
    <ligand>
        <name>NADPH</name>
        <dbReference type="ChEBI" id="CHEBI:57783"/>
    </ligand>
</feature>
<feature type="binding site" evidence="1">
    <location>
        <position position="224"/>
    </location>
    <ligand>
        <name>1-deoxy-D-xylulose 5-phosphate</name>
        <dbReference type="ChEBI" id="CHEBI:57792"/>
    </ligand>
</feature>
<feature type="binding site" evidence="1">
    <location>
        <position position="229"/>
    </location>
    <ligand>
        <name>1-deoxy-D-xylulose 5-phosphate</name>
        <dbReference type="ChEBI" id="CHEBI:57792"/>
    </ligand>
</feature>
<feature type="binding site" evidence="1">
    <location>
        <position position="230"/>
    </location>
    <ligand>
        <name>1-deoxy-D-xylulose 5-phosphate</name>
        <dbReference type="ChEBI" id="CHEBI:57792"/>
    </ligand>
</feature>
<feature type="binding site" evidence="1">
    <location>
        <position position="233"/>
    </location>
    <ligand>
        <name>1-deoxy-D-xylulose 5-phosphate</name>
        <dbReference type="ChEBI" id="CHEBI:57792"/>
    </ligand>
</feature>
<feature type="binding site" evidence="1">
    <location>
        <position position="233"/>
    </location>
    <ligand>
        <name>Mn(2+)</name>
        <dbReference type="ChEBI" id="CHEBI:29035"/>
    </ligand>
</feature>